<proteinExistence type="evidence at protein level"/>
<dbReference type="EC" id="3.11.1.1" evidence="1"/>
<dbReference type="EMBL" id="U45309">
    <property type="protein sequence ID" value="AAC45742.1"/>
    <property type="molecule type" value="Genomic_DNA"/>
</dbReference>
<dbReference type="EMBL" id="AE004091">
    <property type="protein sequence ID" value="AAG04700.1"/>
    <property type="molecule type" value="Genomic_DNA"/>
</dbReference>
<dbReference type="PIR" id="C83482">
    <property type="entry name" value="C83482"/>
</dbReference>
<dbReference type="RefSeq" id="NP_250002.1">
    <property type="nucleotide sequence ID" value="NC_002516.2"/>
</dbReference>
<dbReference type="RefSeq" id="WP_003112369.1">
    <property type="nucleotide sequence ID" value="NZ_QZGE01000005.1"/>
</dbReference>
<dbReference type="SMR" id="Q9I433"/>
<dbReference type="STRING" id="208964.PA1311"/>
<dbReference type="PaxDb" id="208964-PA1311"/>
<dbReference type="DNASU" id="881484"/>
<dbReference type="GeneID" id="881484"/>
<dbReference type="KEGG" id="pae:PA1311"/>
<dbReference type="PATRIC" id="fig|208964.12.peg.1362"/>
<dbReference type="PseudoCAP" id="PA1311"/>
<dbReference type="HOGENOM" id="CLU_045011_12_0_6"/>
<dbReference type="InParanoid" id="Q9I433"/>
<dbReference type="OrthoDB" id="5504491at2"/>
<dbReference type="PhylomeDB" id="Q9I433"/>
<dbReference type="BioCyc" id="MetaCyc:PHNXPSEUDO-MONOMER"/>
<dbReference type="BioCyc" id="PAER208964:G1FZ6-1336-MONOMER"/>
<dbReference type="BRENDA" id="3.11.1.1">
    <property type="organism ID" value="5087"/>
</dbReference>
<dbReference type="Proteomes" id="UP000002438">
    <property type="component" value="Chromosome"/>
</dbReference>
<dbReference type="GO" id="GO:0005829">
    <property type="term" value="C:cytosol"/>
    <property type="evidence" value="ECO:0000318"/>
    <property type="project" value="GO_Central"/>
</dbReference>
<dbReference type="GO" id="GO:0000287">
    <property type="term" value="F:magnesium ion binding"/>
    <property type="evidence" value="ECO:0007669"/>
    <property type="project" value="UniProtKB-UniRule"/>
</dbReference>
<dbReference type="GO" id="GO:0008967">
    <property type="term" value="F:phosphoglycolate phosphatase activity"/>
    <property type="evidence" value="ECO:0000318"/>
    <property type="project" value="GO_Central"/>
</dbReference>
<dbReference type="GO" id="GO:0050194">
    <property type="term" value="F:phosphonoacetaldehyde hydrolase activity"/>
    <property type="evidence" value="ECO:0000314"/>
    <property type="project" value="PseudoCAP"/>
</dbReference>
<dbReference type="GO" id="GO:0006281">
    <property type="term" value="P:DNA repair"/>
    <property type="evidence" value="ECO:0000318"/>
    <property type="project" value="GO_Central"/>
</dbReference>
<dbReference type="GO" id="GO:0019700">
    <property type="term" value="P:organic phosphonate catabolic process"/>
    <property type="evidence" value="ECO:0000314"/>
    <property type="project" value="PseudoCAP"/>
</dbReference>
<dbReference type="CDD" id="cd02586">
    <property type="entry name" value="HAD_PHN"/>
    <property type="match status" value="1"/>
</dbReference>
<dbReference type="FunFam" id="1.10.150.240:FF:000006">
    <property type="entry name" value="Phosphonoacetaldehyde hydrolase"/>
    <property type="match status" value="1"/>
</dbReference>
<dbReference type="Gene3D" id="3.40.50.1000">
    <property type="entry name" value="HAD superfamily/HAD-like"/>
    <property type="match status" value="1"/>
</dbReference>
<dbReference type="Gene3D" id="1.10.150.240">
    <property type="entry name" value="Putative phosphatase, domain 2"/>
    <property type="match status" value="1"/>
</dbReference>
<dbReference type="HAMAP" id="MF_01375">
    <property type="entry name" value="PhnX"/>
    <property type="match status" value="1"/>
</dbReference>
<dbReference type="InterPro" id="IPR050155">
    <property type="entry name" value="HAD-like_hydrolase_sf"/>
</dbReference>
<dbReference type="InterPro" id="IPR036412">
    <property type="entry name" value="HAD-like_sf"/>
</dbReference>
<dbReference type="InterPro" id="IPR006439">
    <property type="entry name" value="HAD-SF_hydro_IA"/>
</dbReference>
<dbReference type="InterPro" id="IPR023214">
    <property type="entry name" value="HAD_sf"/>
</dbReference>
<dbReference type="InterPro" id="IPR023198">
    <property type="entry name" value="PGP-like_dom2"/>
</dbReference>
<dbReference type="InterPro" id="IPR006323">
    <property type="entry name" value="Phosphonoacetald_hydro"/>
</dbReference>
<dbReference type="NCBIfam" id="TIGR01509">
    <property type="entry name" value="HAD-SF-IA-v3"/>
    <property type="match status" value="1"/>
</dbReference>
<dbReference type="NCBIfam" id="TIGR01422">
    <property type="entry name" value="phosphonatase"/>
    <property type="match status" value="1"/>
</dbReference>
<dbReference type="PANTHER" id="PTHR43434">
    <property type="entry name" value="PHOSPHOGLYCOLATE PHOSPHATASE"/>
    <property type="match status" value="1"/>
</dbReference>
<dbReference type="PANTHER" id="PTHR43434:SF19">
    <property type="entry name" value="PHOSPHONOACETALDEHYDE HYDROLASE"/>
    <property type="match status" value="1"/>
</dbReference>
<dbReference type="Pfam" id="PF00702">
    <property type="entry name" value="Hydrolase"/>
    <property type="match status" value="1"/>
</dbReference>
<dbReference type="SFLD" id="SFLDG01129">
    <property type="entry name" value="C1.5:_HAD__Beta-PGM__Phosphata"/>
    <property type="match status" value="1"/>
</dbReference>
<dbReference type="SFLD" id="SFLDF00038">
    <property type="entry name" value="phosphonoacetaldehyde_hydrolas"/>
    <property type="match status" value="1"/>
</dbReference>
<dbReference type="SUPFAM" id="SSF56784">
    <property type="entry name" value="HAD-like"/>
    <property type="match status" value="1"/>
</dbReference>
<comment type="function">
    <text>Involved in phosphonate degradation.</text>
</comment>
<comment type="catalytic activity">
    <reaction evidence="1">
        <text>phosphonoacetaldehyde + H2O = acetaldehyde + phosphate + H(+)</text>
        <dbReference type="Rhea" id="RHEA:18905"/>
        <dbReference type="ChEBI" id="CHEBI:15343"/>
        <dbReference type="ChEBI" id="CHEBI:15377"/>
        <dbReference type="ChEBI" id="CHEBI:15378"/>
        <dbReference type="ChEBI" id="CHEBI:43474"/>
        <dbReference type="ChEBI" id="CHEBI:58383"/>
        <dbReference type="EC" id="3.11.1.1"/>
    </reaction>
</comment>
<comment type="cofactor">
    <cofactor evidence="1">
        <name>Mg(2+)</name>
        <dbReference type="ChEBI" id="CHEBI:18420"/>
    </cofactor>
    <text evidence="1">Binds 1 Mg(2+) ion per subunit.</text>
</comment>
<comment type="activity regulation">
    <text evidence="2">Inhibited by phosphite, moderately inhibited by phosphonic acids, the corresponding aminophosphonic acids activate the enzyme.</text>
</comment>
<comment type="biophysicochemical properties">
    <kinetics>
        <KM evidence="2 3">210 uM for 2-phosphonoacetaldehyde</KM>
    </kinetics>
</comment>
<comment type="subunit">
    <text evidence="1 2">Homodimer.</text>
</comment>
<comment type="induction">
    <text evidence="2">By 2-aminoethylphosphonic acid.</text>
</comment>
<comment type="similarity">
    <text evidence="1">Belongs to the HAD-like hydrolase superfamily. PhnX family.</text>
</comment>
<organism>
    <name type="scientific">Pseudomonas aeruginosa (strain ATCC 15692 / DSM 22644 / CIP 104116 / JCM 14847 / LMG 12228 / 1C / PRS 101 / PAO1)</name>
    <dbReference type="NCBI Taxonomy" id="208964"/>
    <lineage>
        <taxon>Bacteria</taxon>
        <taxon>Pseudomonadati</taxon>
        <taxon>Pseudomonadota</taxon>
        <taxon>Gammaproteobacteria</taxon>
        <taxon>Pseudomonadales</taxon>
        <taxon>Pseudomonadaceae</taxon>
        <taxon>Pseudomonas</taxon>
    </lineage>
</organism>
<keyword id="KW-0903">Direct protein sequencing</keyword>
<keyword id="KW-0378">Hydrolase</keyword>
<keyword id="KW-0460">Magnesium</keyword>
<keyword id="KW-0479">Metal-binding</keyword>
<keyword id="KW-1185">Reference proteome</keyword>
<keyword id="KW-0704">Schiff base</keyword>
<accession>Q9I433</accession>
<accession>Q51386</accession>
<evidence type="ECO:0000255" key="1">
    <source>
        <dbReference type="HAMAP-Rule" id="MF_01375"/>
    </source>
</evidence>
<evidence type="ECO:0000269" key="2">
    <source>
    </source>
</evidence>
<evidence type="ECO:0000269" key="3">
    <source>
    </source>
</evidence>
<evidence type="ECO:0000305" key="4"/>
<feature type="chain" id="PRO_0000284591" description="Phosphonoacetaldehyde hydrolase">
    <location>
        <begin position="1"/>
        <end position="275"/>
    </location>
</feature>
<feature type="active site" description="Nucleophile" evidence="1">
    <location>
        <position position="15"/>
    </location>
</feature>
<feature type="active site" description="Schiff-base intermediate with substrate" evidence="1">
    <location>
        <position position="56"/>
    </location>
</feature>
<feature type="binding site" evidence="1">
    <location>
        <position position="15"/>
    </location>
    <ligand>
        <name>Mg(2+)</name>
        <dbReference type="ChEBI" id="CHEBI:18420"/>
    </ligand>
</feature>
<feature type="binding site" evidence="1">
    <location>
        <position position="17"/>
    </location>
    <ligand>
        <name>Mg(2+)</name>
        <dbReference type="ChEBI" id="CHEBI:18420"/>
    </ligand>
</feature>
<feature type="binding site" evidence="1">
    <location>
        <position position="189"/>
    </location>
    <ligand>
        <name>Mg(2+)</name>
        <dbReference type="ChEBI" id="CHEBI:18420"/>
    </ligand>
</feature>
<feature type="sequence conflict" description="In Ref. 1; AAC45742." evidence="4" ref="1">
    <original>Q</original>
    <variation>K</variation>
    <location>
        <position position="222"/>
    </location>
</feature>
<protein>
    <recommendedName>
        <fullName evidence="1">Phosphonoacetaldehyde hydrolase</fullName>
        <shortName evidence="1">Phosphonatase</shortName>
        <ecNumber evidence="1">3.11.1.1</ecNumber>
    </recommendedName>
    <alternativeName>
        <fullName evidence="1">Phosphonoacetaldehyde phosphonohydrolase</fullName>
    </alternativeName>
</protein>
<name>PHNX_PSEAE</name>
<gene>
    <name evidence="1" type="primary">phnX</name>
    <name type="ordered locus">PA1311</name>
</gene>
<reference key="1">
    <citation type="journal article" date="1997" name="Gene">
        <title>First characterization of the phosphonoacetaldehyde hydrolase gene of Pseudomonas aeruginosa.</title>
        <authorList>
            <person name="Dumora C."/>
            <person name="Marche M."/>
            <person name="Doignon F."/>
            <person name="Aigle M."/>
            <person name="Cassaigne A."/>
            <person name="Crouzet M."/>
        </authorList>
    </citation>
    <scope>NUCLEOTIDE SEQUENCE [GENOMIC DNA]</scope>
    <scope>PROTEIN SEQUENCE OF 1-20</scope>
    <scope>CHARACTERIZATION</scope>
    <source>
        <strain>A237</strain>
    </source>
</reference>
<reference key="2">
    <citation type="journal article" date="2000" name="Nature">
        <title>Complete genome sequence of Pseudomonas aeruginosa PAO1, an opportunistic pathogen.</title>
        <authorList>
            <person name="Stover C.K."/>
            <person name="Pham X.-Q.T."/>
            <person name="Erwin A.L."/>
            <person name="Mizoguchi S.D."/>
            <person name="Warrener P."/>
            <person name="Hickey M.J."/>
            <person name="Brinkman F.S.L."/>
            <person name="Hufnagle W.O."/>
            <person name="Kowalik D.J."/>
            <person name="Lagrou M."/>
            <person name="Garber R.L."/>
            <person name="Goltry L."/>
            <person name="Tolentino E."/>
            <person name="Westbrock-Wadman S."/>
            <person name="Yuan Y."/>
            <person name="Brody L.L."/>
            <person name="Coulter S.N."/>
            <person name="Folger K.R."/>
            <person name="Kas A."/>
            <person name="Larbig K."/>
            <person name="Lim R.M."/>
            <person name="Smith K.A."/>
            <person name="Spencer D.H."/>
            <person name="Wong G.K.-S."/>
            <person name="Wu Z."/>
            <person name="Paulsen I.T."/>
            <person name="Reizer J."/>
            <person name="Saier M.H. Jr."/>
            <person name="Hancock R.E.W."/>
            <person name="Lory S."/>
            <person name="Olson M.V."/>
        </authorList>
    </citation>
    <scope>NUCLEOTIDE SEQUENCE [LARGE SCALE GENOMIC DNA]</scope>
    <source>
        <strain>ATCC 15692 / DSM 22644 / CIP 104116 / JCM 14847 / LMG 12228 / 1C / PRS 101 / PAO1</strain>
    </source>
</reference>
<reference key="3">
    <citation type="journal article" date="1989" name="Biochim. Biophys. Acta">
        <title>Phosphonoacetaldehyde hydrolase from Pseudomonas aeruginosa: purification properties and comparison with Bacillus cereus enzyme.</title>
        <authorList>
            <person name="Dumora C."/>
            <person name="Lacoste A.-M."/>
            <person name="Cassaigne A."/>
        </authorList>
    </citation>
    <scope>INDUCTION</scope>
    <scope>CHARACTERIZATION</scope>
    <scope>ACTIVITY REGULATION</scope>
    <scope>SUBUNIT</scope>
    <source>
        <strain>A237</strain>
    </source>
</reference>
<sequence length="275" mass="29929">MNYNQPATLQAAILDWAGTVVDFGSFAPTQIFVEAFAEFGVQVSLEEARGPMGMGKWDHIRTLCDIPAIAERYRAVFGRLPSDDDVTAIYERFMPLQIEKIAEHSALIPGALQAIAELRGMGLKIGSCSGYPAVVMEKVVALAETNGYVADHVVATDEVPNGRPWPAQALANVIALGIDDVAACVKVDDTWPGILEGRRAGMWTVALTCSGNALGLTYEQYQALPAAELERERTRIEQMFEGSRPHYLIETIAELPAVVRDINARLARGEMPQGN</sequence>